<dbReference type="EMBL" id="CP001393">
    <property type="protein sequence ID" value="ACM60509.1"/>
    <property type="molecule type" value="Genomic_DNA"/>
</dbReference>
<dbReference type="RefSeq" id="WP_015907877.1">
    <property type="nucleotide sequence ID" value="NC_012034.1"/>
</dbReference>
<dbReference type="SMR" id="B9MS55"/>
<dbReference type="STRING" id="521460.Athe_1411"/>
<dbReference type="GeneID" id="31772756"/>
<dbReference type="KEGG" id="ate:Athe_1411"/>
<dbReference type="eggNOG" id="COG1381">
    <property type="taxonomic scope" value="Bacteria"/>
</dbReference>
<dbReference type="HOGENOM" id="CLU_066632_3_0_9"/>
<dbReference type="Proteomes" id="UP000007723">
    <property type="component" value="Chromosome"/>
</dbReference>
<dbReference type="GO" id="GO:0043590">
    <property type="term" value="C:bacterial nucleoid"/>
    <property type="evidence" value="ECO:0007669"/>
    <property type="project" value="TreeGrafter"/>
</dbReference>
<dbReference type="GO" id="GO:0006310">
    <property type="term" value="P:DNA recombination"/>
    <property type="evidence" value="ECO:0007669"/>
    <property type="project" value="UniProtKB-UniRule"/>
</dbReference>
<dbReference type="GO" id="GO:0006302">
    <property type="term" value="P:double-strand break repair"/>
    <property type="evidence" value="ECO:0007669"/>
    <property type="project" value="TreeGrafter"/>
</dbReference>
<dbReference type="Gene3D" id="2.40.50.140">
    <property type="entry name" value="Nucleic acid-binding proteins"/>
    <property type="match status" value="1"/>
</dbReference>
<dbReference type="Gene3D" id="1.20.1440.120">
    <property type="entry name" value="Recombination protein O, C-terminal domain"/>
    <property type="match status" value="1"/>
</dbReference>
<dbReference type="HAMAP" id="MF_00201">
    <property type="entry name" value="RecO"/>
    <property type="match status" value="1"/>
</dbReference>
<dbReference type="InterPro" id="IPR037278">
    <property type="entry name" value="ARFGAP/RecO"/>
</dbReference>
<dbReference type="InterPro" id="IPR022572">
    <property type="entry name" value="DNA_rep/recomb_RecO_N"/>
</dbReference>
<dbReference type="InterPro" id="IPR012340">
    <property type="entry name" value="NA-bd_OB-fold"/>
</dbReference>
<dbReference type="InterPro" id="IPR003717">
    <property type="entry name" value="RecO"/>
</dbReference>
<dbReference type="InterPro" id="IPR042242">
    <property type="entry name" value="RecO_C"/>
</dbReference>
<dbReference type="NCBIfam" id="TIGR00613">
    <property type="entry name" value="reco"/>
    <property type="match status" value="1"/>
</dbReference>
<dbReference type="PANTHER" id="PTHR33991">
    <property type="entry name" value="DNA REPAIR PROTEIN RECO"/>
    <property type="match status" value="1"/>
</dbReference>
<dbReference type="PANTHER" id="PTHR33991:SF1">
    <property type="entry name" value="DNA REPAIR PROTEIN RECO"/>
    <property type="match status" value="1"/>
</dbReference>
<dbReference type="Pfam" id="PF02565">
    <property type="entry name" value="RecO_C"/>
    <property type="match status" value="1"/>
</dbReference>
<dbReference type="Pfam" id="PF11967">
    <property type="entry name" value="RecO_N"/>
    <property type="match status" value="1"/>
</dbReference>
<dbReference type="SUPFAM" id="SSF57863">
    <property type="entry name" value="ArfGap/RecO-like zinc finger"/>
    <property type="match status" value="1"/>
</dbReference>
<dbReference type="SUPFAM" id="SSF50249">
    <property type="entry name" value="Nucleic acid-binding proteins"/>
    <property type="match status" value="1"/>
</dbReference>
<gene>
    <name evidence="1" type="primary">recO</name>
    <name type="ordered locus">Athe_1411</name>
</gene>
<feature type="chain" id="PRO_1000193349" description="DNA repair protein RecO">
    <location>
        <begin position="1"/>
        <end position="244"/>
    </location>
</feature>
<proteinExistence type="inferred from homology"/>
<comment type="function">
    <text evidence="1">Involved in DNA repair and RecF pathway recombination.</text>
</comment>
<comment type="similarity">
    <text evidence="1">Belongs to the RecO family.</text>
</comment>
<accession>B9MS55</accession>
<reference key="1">
    <citation type="submission" date="2009-01" db="EMBL/GenBank/DDBJ databases">
        <title>Complete sequence of chromosome of Caldicellulosiruptor becscii DSM 6725.</title>
        <authorList>
            <person name="Lucas S."/>
            <person name="Copeland A."/>
            <person name="Lapidus A."/>
            <person name="Glavina del Rio T."/>
            <person name="Tice H."/>
            <person name="Bruce D."/>
            <person name="Goodwin L."/>
            <person name="Pitluck S."/>
            <person name="Sims D."/>
            <person name="Meincke L."/>
            <person name="Brettin T."/>
            <person name="Detter J.C."/>
            <person name="Han C."/>
            <person name="Larimer F."/>
            <person name="Land M."/>
            <person name="Hauser L."/>
            <person name="Kyrpides N."/>
            <person name="Ovchinnikova G."/>
            <person name="Kataeva I."/>
            <person name="Adams M.W.W."/>
        </authorList>
    </citation>
    <scope>NUCLEOTIDE SEQUENCE [LARGE SCALE GENOMIC DNA]</scope>
    <source>
        <strain>ATCC BAA-1888 / DSM 6725 / KCTC 15123 / Z-1320</strain>
    </source>
</reference>
<keyword id="KW-0227">DNA damage</keyword>
<keyword id="KW-0233">DNA recombination</keyword>
<keyword id="KW-0234">DNA repair</keyword>
<evidence type="ECO:0000255" key="1">
    <source>
        <dbReference type="HAMAP-Rule" id="MF_00201"/>
    </source>
</evidence>
<protein>
    <recommendedName>
        <fullName evidence="1">DNA repair protein RecO</fullName>
    </recommendedName>
    <alternativeName>
        <fullName evidence="1">Recombination protein O</fullName>
    </alternativeName>
</protein>
<name>RECO_CALBD</name>
<sequence>MKLIKTKGIVLKETNFEESSKILTVLTSDFGKIQVLSKNCRRLLSVLSACSQPLMFCEFVIRKTKDIYSISSASVIESFFELSQDVNLAIYSGYLIELVDSFLEFEQKNEDVLRLLLNSLYLLKKGKDPEVVSRIFEIKILVYTGFFLQFTQCVKCQRKDITRAFFSFKDGGLTCEKCKEENDIEIEIEVVKSILVIVATNLKKLNKISLERSLNNKIKTITLPYIKMVLQKDIKILDFFRFIQ</sequence>
<organism>
    <name type="scientific">Caldicellulosiruptor bescii (strain ATCC BAA-1888 / DSM 6725 / KCTC 15123 / Z-1320)</name>
    <name type="common">Anaerocellum thermophilum</name>
    <dbReference type="NCBI Taxonomy" id="521460"/>
    <lineage>
        <taxon>Bacteria</taxon>
        <taxon>Bacillati</taxon>
        <taxon>Bacillota</taxon>
        <taxon>Bacillota incertae sedis</taxon>
        <taxon>Caldicellulosiruptorales</taxon>
        <taxon>Caldicellulosiruptoraceae</taxon>
        <taxon>Caldicellulosiruptor</taxon>
    </lineage>
</organism>